<reference key="1">
    <citation type="journal article" date="2006" name="Proc. Natl. Acad. Sci. U.S.A.">
        <title>Genome sequence of Synechococcus CC9311: insights into adaptation to a coastal environment.</title>
        <authorList>
            <person name="Palenik B."/>
            <person name="Ren Q."/>
            <person name="Dupont C.L."/>
            <person name="Myers G.S."/>
            <person name="Heidelberg J.F."/>
            <person name="Badger J.H."/>
            <person name="Madupu R."/>
            <person name="Nelson W.C."/>
            <person name="Brinkac L.M."/>
            <person name="Dodson R.J."/>
            <person name="Durkin A.S."/>
            <person name="Daugherty S.C."/>
            <person name="Sullivan S.A."/>
            <person name="Khouri H."/>
            <person name="Mohamoud Y."/>
            <person name="Halpin R."/>
            <person name="Paulsen I.T."/>
        </authorList>
    </citation>
    <scope>NUCLEOTIDE SEQUENCE [LARGE SCALE GENOMIC DNA]</scope>
    <source>
        <strain>CC9311</strain>
    </source>
</reference>
<name>PYRF_SYNS3</name>
<organism>
    <name type="scientific">Synechococcus sp. (strain CC9311)</name>
    <dbReference type="NCBI Taxonomy" id="64471"/>
    <lineage>
        <taxon>Bacteria</taxon>
        <taxon>Bacillati</taxon>
        <taxon>Cyanobacteriota</taxon>
        <taxon>Cyanophyceae</taxon>
        <taxon>Synechococcales</taxon>
        <taxon>Synechococcaceae</taxon>
        <taxon>Synechococcus</taxon>
    </lineage>
</organism>
<sequence length="243" mass="25239">MASSFSAESAERIIVALDGMAPDQALAFSAQVQGLRWVKVGLELFVQAGPEVVIQLRNQGLRVFLDLKFHDIPTTMAGACLRAAALGAELITVHACAGSEALQAAQAAVVEGAQSTGQPVPTLLAVTVLTSWEEHRLQRELAVEQGIAERVSQLALLAAKAGVGGCVCSPLEVASLRAQHREPFALVTPGIRPQGTSVGDQVRVMTPPAAIEAGASQLVIGRPITQSENPSGAFAQCCTALST</sequence>
<accession>Q0I824</accession>
<protein>
    <recommendedName>
        <fullName evidence="1">Orotidine 5'-phosphate decarboxylase</fullName>
        <ecNumber evidence="1">4.1.1.23</ecNumber>
    </recommendedName>
    <alternativeName>
        <fullName evidence="1">OMP decarboxylase</fullName>
        <shortName evidence="1">OMPDCase</shortName>
        <shortName evidence="1">OMPdecase</shortName>
    </alternativeName>
</protein>
<feature type="chain" id="PRO_1000065957" description="Orotidine 5'-phosphate decarboxylase">
    <location>
        <begin position="1"/>
        <end position="243"/>
    </location>
</feature>
<feature type="active site" description="Proton donor" evidence="1">
    <location>
        <position position="68"/>
    </location>
</feature>
<feature type="binding site" evidence="1">
    <location>
        <position position="18"/>
    </location>
    <ligand>
        <name>substrate</name>
    </ligand>
</feature>
<feature type="binding site" evidence="1">
    <location>
        <position position="39"/>
    </location>
    <ligand>
        <name>substrate</name>
    </ligand>
</feature>
<feature type="binding site" evidence="1">
    <location>
        <begin position="66"/>
        <end position="75"/>
    </location>
    <ligand>
        <name>substrate</name>
    </ligand>
</feature>
<feature type="binding site" evidence="1">
    <location>
        <position position="130"/>
    </location>
    <ligand>
        <name>substrate</name>
    </ligand>
</feature>
<feature type="binding site" evidence="1">
    <location>
        <position position="192"/>
    </location>
    <ligand>
        <name>substrate</name>
    </ligand>
</feature>
<feature type="binding site" evidence="1">
    <location>
        <position position="201"/>
    </location>
    <ligand>
        <name>substrate</name>
    </ligand>
</feature>
<feature type="binding site" evidence="1">
    <location>
        <position position="221"/>
    </location>
    <ligand>
        <name>substrate</name>
    </ligand>
</feature>
<feature type="binding site" evidence="1">
    <location>
        <position position="222"/>
    </location>
    <ligand>
        <name>substrate</name>
    </ligand>
</feature>
<proteinExistence type="inferred from homology"/>
<evidence type="ECO:0000255" key="1">
    <source>
        <dbReference type="HAMAP-Rule" id="MF_01200"/>
    </source>
</evidence>
<comment type="function">
    <text evidence="1">Catalyzes the decarboxylation of orotidine 5'-monophosphate (OMP) to uridine 5'-monophosphate (UMP).</text>
</comment>
<comment type="catalytic activity">
    <reaction evidence="1">
        <text>orotidine 5'-phosphate + H(+) = UMP + CO2</text>
        <dbReference type="Rhea" id="RHEA:11596"/>
        <dbReference type="ChEBI" id="CHEBI:15378"/>
        <dbReference type="ChEBI" id="CHEBI:16526"/>
        <dbReference type="ChEBI" id="CHEBI:57538"/>
        <dbReference type="ChEBI" id="CHEBI:57865"/>
        <dbReference type="EC" id="4.1.1.23"/>
    </reaction>
</comment>
<comment type="pathway">
    <text evidence="1">Pyrimidine metabolism; UMP biosynthesis via de novo pathway; UMP from orotate: step 2/2.</text>
</comment>
<comment type="subunit">
    <text evidence="1">Homodimer.</text>
</comment>
<comment type="similarity">
    <text evidence="1">Belongs to the OMP decarboxylase family. Type 1 subfamily.</text>
</comment>
<gene>
    <name evidence="1" type="primary">pyrF</name>
    <name type="ordered locus">sync_2200</name>
</gene>
<dbReference type="EC" id="4.1.1.23" evidence="1"/>
<dbReference type="EMBL" id="CP000435">
    <property type="protein sequence ID" value="ABI45602.1"/>
    <property type="molecule type" value="Genomic_DNA"/>
</dbReference>
<dbReference type="SMR" id="Q0I824"/>
<dbReference type="STRING" id="64471.sync_2200"/>
<dbReference type="KEGG" id="syg:sync_2200"/>
<dbReference type="eggNOG" id="COG0284">
    <property type="taxonomic scope" value="Bacteria"/>
</dbReference>
<dbReference type="HOGENOM" id="CLU_067069_1_0_3"/>
<dbReference type="OrthoDB" id="9806203at2"/>
<dbReference type="UniPathway" id="UPA00070">
    <property type="reaction ID" value="UER00120"/>
</dbReference>
<dbReference type="Proteomes" id="UP000001961">
    <property type="component" value="Chromosome"/>
</dbReference>
<dbReference type="GO" id="GO:0005829">
    <property type="term" value="C:cytosol"/>
    <property type="evidence" value="ECO:0007669"/>
    <property type="project" value="TreeGrafter"/>
</dbReference>
<dbReference type="GO" id="GO:0004590">
    <property type="term" value="F:orotidine-5'-phosphate decarboxylase activity"/>
    <property type="evidence" value="ECO:0007669"/>
    <property type="project" value="UniProtKB-UniRule"/>
</dbReference>
<dbReference type="GO" id="GO:0006207">
    <property type="term" value="P:'de novo' pyrimidine nucleobase biosynthetic process"/>
    <property type="evidence" value="ECO:0007669"/>
    <property type="project" value="InterPro"/>
</dbReference>
<dbReference type="GO" id="GO:0044205">
    <property type="term" value="P:'de novo' UMP biosynthetic process"/>
    <property type="evidence" value="ECO:0007669"/>
    <property type="project" value="UniProtKB-UniRule"/>
</dbReference>
<dbReference type="CDD" id="cd04725">
    <property type="entry name" value="OMP_decarboxylase_like"/>
    <property type="match status" value="1"/>
</dbReference>
<dbReference type="FunFam" id="3.20.20.70:FF:000015">
    <property type="entry name" value="Orotidine 5'-phosphate decarboxylase"/>
    <property type="match status" value="1"/>
</dbReference>
<dbReference type="Gene3D" id="3.20.20.70">
    <property type="entry name" value="Aldolase class I"/>
    <property type="match status" value="1"/>
</dbReference>
<dbReference type="HAMAP" id="MF_01200_B">
    <property type="entry name" value="OMPdecase_type1_B"/>
    <property type="match status" value="1"/>
</dbReference>
<dbReference type="InterPro" id="IPR013785">
    <property type="entry name" value="Aldolase_TIM"/>
</dbReference>
<dbReference type="InterPro" id="IPR014732">
    <property type="entry name" value="OMPdecase"/>
</dbReference>
<dbReference type="InterPro" id="IPR018089">
    <property type="entry name" value="OMPdecase_AS"/>
</dbReference>
<dbReference type="InterPro" id="IPR047596">
    <property type="entry name" value="OMPdecase_bac"/>
</dbReference>
<dbReference type="InterPro" id="IPR001754">
    <property type="entry name" value="OMPdeCOase_dom"/>
</dbReference>
<dbReference type="InterPro" id="IPR011060">
    <property type="entry name" value="RibuloseP-bd_barrel"/>
</dbReference>
<dbReference type="NCBIfam" id="NF001273">
    <property type="entry name" value="PRK00230.1"/>
    <property type="match status" value="1"/>
</dbReference>
<dbReference type="NCBIfam" id="TIGR01740">
    <property type="entry name" value="pyrF"/>
    <property type="match status" value="1"/>
</dbReference>
<dbReference type="PANTHER" id="PTHR32119">
    <property type="entry name" value="OROTIDINE 5'-PHOSPHATE DECARBOXYLASE"/>
    <property type="match status" value="1"/>
</dbReference>
<dbReference type="PANTHER" id="PTHR32119:SF2">
    <property type="entry name" value="OROTIDINE 5'-PHOSPHATE DECARBOXYLASE"/>
    <property type="match status" value="1"/>
</dbReference>
<dbReference type="Pfam" id="PF00215">
    <property type="entry name" value="OMPdecase"/>
    <property type="match status" value="1"/>
</dbReference>
<dbReference type="SMART" id="SM00934">
    <property type="entry name" value="OMPdecase"/>
    <property type="match status" value="1"/>
</dbReference>
<dbReference type="SUPFAM" id="SSF51366">
    <property type="entry name" value="Ribulose-phoshate binding barrel"/>
    <property type="match status" value="1"/>
</dbReference>
<dbReference type="PROSITE" id="PS00156">
    <property type="entry name" value="OMPDECASE"/>
    <property type="match status" value="1"/>
</dbReference>
<keyword id="KW-0210">Decarboxylase</keyword>
<keyword id="KW-0456">Lyase</keyword>
<keyword id="KW-0665">Pyrimidine biosynthesis</keyword>
<keyword id="KW-1185">Reference proteome</keyword>